<proteinExistence type="inferred from homology"/>
<feature type="chain" id="PRO_0000405353" description="Tyrosine phosphatase H3">
    <location>
        <begin position="1"/>
        <end position="320"/>
    </location>
</feature>
<feature type="domain" description="Tyrosine-protein phosphatase" evidence="1">
    <location>
        <begin position="22"/>
        <end position="309"/>
    </location>
</feature>
<feature type="active site" description="Phosphocysteine intermediate" evidence="1 2">
    <location>
        <position position="250"/>
    </location>
</feature>
<dbReference type="EC" id="3.1.3.48"/>
<dbReference type="EMBL" id="AY875685">
    <property type="protein sequence ID" value="AAW51787.1"/>
    <property type="molecule type" value="Genomic_DNA"/>
</dbReference>
<dbReference type="RefSeq" id="YP_239383.1">
    <property type="nucleotide sequence ID" value="NC_007035.1"/>
</dbReference>
<dbReference type="SMR" id="Q5I145"/>
<dbReference type="KEGG" id="vg:5075818"/>
<dbReference type="Proteomes" id="UP000008168">
    <property type="component" value="Genome"/>
</dbReference>
<dbReference type="GO" id="GO:0004725">
    <property type="term" value="F:protein tyrosine phosphatase activity"/>
    <property type="evidence" value="ECO:0007669"/>
    <property type="project" value="UniProtKB-EC"/>
</dbReference>
<dbReference type="GO" id="GO:0052170">
    <property type="term" value="P:symbiont-mediated suppression of host innate immune response"/>
    <property type="evidence" value="ECO:0007669"/>
    <property type="project" value="UniProtKB-KW"/>
</dbReference>
<dbReference type="Gene3D" id="3.90.190.10">
    <property type="entry name" value="Protein tyrosine phosphatase superfamily"/>
    <property type="match status" value="1"/>
</dbReference>
<dbReference type="InterPro" id="IPR029021">
    <property type="entry name" value="Prot-tyrosine_phosphatase-like"/>
</dbReference>
<dbReference type="InterPro" id="IPR050348">
    <property type="entry name" value="Protein-Tyr_Phosphatase"/>
</dbReference>
<dbReference type="InterPro" id="IPR000242">
    <property type="entry name" value="PTP_cat"/>
</dbReference>
<dbReference type="InterPro" id="IPR016130">
    <property type="entry name" value="Tyr_Pase_AS"/>
</dbReference>
<dbReference type="InterPro" id="IPR003595">
    <property type="entry name" value="Tyr_Pase_cat"/>
</dbReference>
<dbReference type="InterPro" id="IPR000387">
    <property type="entry name" value="Tyr_Pase_dom"/>
</dbReference>
<dbReference type="PANTHER" id="PTHR19134:SF534">
    <property type="entry name" value="LD27988P"/>
    <property type="match status" value="1"/>
</dbReference>
<dbReference type="PANTHER" id="PTHR19134">
    <property type="entry name" value="RECEPTOR-TYPE TYROSINE-PROTEIN PHOSPHATASE"/>
    <property type="match status" value="1"/>
</dbReference>
<dbReference type="Pfam" id="PF00102">
    <property type="entry name" value="Y_phosphatase"/>
    <property type="match status" value="1"/>
</dbReference>
<dbReference type="PRINTS" id="PR00700">
    <property type="entry name" value="PRTYPHPHTASE"/>
</dbReference>
<dbReference type="SMART" id="SM00194">
    <property type="entry name" value="PTPc"/>
    <property type="match status" value="1"/>
</dbReference>
<dbReference type="SMART" id="SM00404">
    <property type="entry name" value="PTPc_motif"/>
    <property type="match status" value="1"/>
</dbReference>
<dbReference type="SUPFAM" id="SSF52799">
    <property type="entry name" value="(Phosphotyrosine protein) phosphatases II"/>
    <property type="match status" value="1"/>
</dbReference>
<dbReference type="PROSITE" id="PS00383">
    <property type="entry name" value="TYR_PHOSPHATASE_1"/>
    <property type="match status" value="1"/>
</dbReference>
<dbReference type="PROSITE" id="PS50056">
    <property type="entry name" value="TYR_PHOSPHATASE_2"/>
    <property type="match status" value="1"/>
</dbReference>
<dbReference type="PROSITE" id="PS50055">
    <property type="entry name" value="TYR_PHOSPHATASE_PTP"/>
    <property type="match status" value="1"/>
</dbReference>
<sequence length="320" mass="37219">MPGYCFEIFNVFDFFDKTNKANFWEFVRLEHAQVMDIPISGTVNHFLKPENLRKNRYHDVTCWDNSRVVLSSHGSKMYDYGDSDGKKIIVTSQDSDSTYIHASFVNGFKEANKFICCQGPKESTSGDFWKMVSEHNSSVIVSLTETDDEDQVCYEYWVKEEDYELAFGRYVVKTLEIIEESSFTRTRLRLTDVSSDTSREIHHFWYPHWSDYGNPTNPAEILNLISKVNQKRKEMKKTADSQPGPIVVHCSAGIGRTGTFCTIDNALSQLRKEQTVCLPQTVLKIRKQRHSSVFLPEQYAFCYKAVRYALIREIKKKFFY</sequence>
<organismHost>
    <name type="scientific">Microplitis demolitor</name>
    <name type="common">Parasitoid wasp</name>
    <dbReference type="NCBI Taxonomy" id="69319"/>
</organismHost>
<comment type="function">
    <text evidence="3">Suppresses host immune cell adhesion and phagocytosis.</text>
</comment>
<comment type="catalytic activity">
    <reaction evidence="2">
        <text>O-phospho-L-tyrosyl-[protein] + H2O = L-tyrosyl-[protein] + phosphate</text>
        <dbReference type="Rhea" id="RHEA:10684"/>
        <dbReference type="Rhea" id="RHEA-COMP:10136"/>
        <dbReference type="Rhea" id="RHEA-COMP:20101"/>
        <dbReference type="ChEBI" id="CHEBI:15377"/>
        <dbReference type="ChEBI" id="CHEBI:43474"/>
        <dbReference type="ChEBI" id="CHEBI:46858"/>
        <dbReference type="ChEBI" id="CHEBI:61978"/>
        <dbReference type="EC" id="3.1.3.48"/>
    </reaction>
</comment>
<comment type="similarity">
    <text evidence="4">Belongs to the protein-tyrosine phosphatase family.</text>
</comment>
<keyword id="KW-0945">Host-virus interaction</keyword>
<keyword id="KW-0378">Hydrolase</keyword>
<keyword id="KW-1090">Inhibition of host innate immune response by virus</keyword>
<keyword id="KW-0904">Protein phosphatase</keyword>
<keyword id="KW-1185">Reference proteome</keyword>
<keyword id="KW-0899">Viral immunoevasion</keyword>
<organism>
    <name type="scientific">Microplitis demolitor bracovirus (isolate Webb)</name>
    <name type="common">MdBV</name>
    <dbReference type="NCBI Taxonomy" id="654919"/>
    <lineage>
        <taxon>Viruses</taxon>
        <taxon>Viruses incertae sedis</taxon>
        <taxon>Polydnaviriformidae</taxon>
        <taxon>Bracoviriform</taxon>
        <taxon>Microplitis demolitor bracovirus</taxon>
    </lineage>
</organism>
<reference key="1">
    <citation type="journal article" date="2006" name="Virology">
        <title>Polydnavirus genomes reflect their dual roles as mutualists and pathogens.</title>
        <authorList>
            <person name="Webb B.A."/>
            <person name="Strand M.R."/>
            <person name="Dickey S.E."/>
            <person name="Beck M.H."/>
            <person name="Hilgarth R.S."/>
            <person name="Barney W.E."/>
            <person name="Kadash K."/>
            <person name="Kroemer J.A."/>
            <person name="Lindstrom K.G."/>
            <person name="Rattanadechakul W."/>
            <person name="Shelby K.S."/>
            <person name="Thoetkiattikul H."/>
            <person name="Turnbull M.W."/>
            <person name="Witherell R.A."/>
        </authorList>
    </citation>
    <scope>NUCLEOTIDE SEQUENCE [GENOMIC DNA]</scope>
</reference>
<reference key="2">
    <citation type="journal article" date="2007" name="J. Virol.">
        <title>PTP-H2 and PTP-H3 from Microplitis demolitor Bracovirus localize to focal adhesions and are antiphagocytic in insect immune cells.</title>
        <authorList>
            <person name="Pruijssers A.J."/>
            <person name="Strand M.R."/>
        </authorList>
    </citation>
    <scope>FUNCTION</scope>
</reference>
<evidence type="ECO:0000255" key="1">
    <source>
        <dbReference type="PROSITE-ProRule" id="PRU00160"/>
    </source>
</evidence>
<evidence type="ECO:0000255" key="2">
    <source>
        <dbReference type="PROSITE-ProRule" id="PRU10044"/>
    </source>
</evidence>
<evidence type="ECO:0000269" key="3">
    <source>
    </source>
</evidence>
<evidence type="ECO:0000305" key="4"/>
<name>PTPH3_MDBVW</name>
<gene>
    <name type="primary">H3</name>
</gene>
<protein>
    <recommendedName>
        <fullName>Tyrosine phosphatase H3</fullName>
        <shortName>PTP-H3</shortName>
        <ecNumber>3.1.3.48</ecNumber>
    </recommendedName>
</protein>
<accession>Q5I145</accession>